<sequence>MKKVIFSGIQPSGQLTLGNYIGALKQFGQFQDEYECFYCIVDEHAITVPQDRLKLREQTRSLAALYLAVGLDPEKATLFIQSEVAAHAQAAWILQCNVYIGELERMTQFKDKSDGKAGVSAGLLTYPPLMAADILLYQTNLVPVGEDQKQHIELTRDLAERFNKKHADIFTMPEVFIPKQGARVMSLQDPTKKMSKSDANLKNAIFLLDPPATIRKKIKSAVTDSSGIIEYNKEEKPGVSNLLTIYSVITGETIANIEEKYVGKGYGDFKTDLAELVVAELEQIQERYYAYLESEELDNILDAGAEKAARVANKTLKKMENGVGLGRKRRK</sequence>
<evidence type="ECO:0000255" key="1">
    <source>
        <dbReference type="HAMAP-Rule" id="MF_00140"/>
    </source>
</evidence>
<organism>
    <name type="scientific">Listeria innocua serovar 6a (strain ATCC BAA-680 / CLIP 11262)</name>
    <dbReference type="NCBI Taxonomy" id="272626"/>
    <lineage>
        <taxon>Bacteria</taxon>
        <taxon>Bacillati</taxon>
        <taxon>Bacillota</taxon>
        <taxon>Bacilli</taxon>
        <taxon>Bacillales</taxon>
        <taxon>Listeriaceae</taxon>
        <taxon>Listeria</taxon>
    </lineage>
</organism>
<proteinExistence type="inferred from homology"/>
<gene>
    <name evidence="1" type="primary">trpS</name>
    <name type="ordered locus">lin2301</name>
</gene>
<keyword id="KW-0030">Aminoacyl-tRNA synthetase</keyword>
<keyword id="KW-0067">ATP-binding</keyword>
<keyword id="KW-0963">Cytoplasm</keyword>
<keyword id="KW-0436">Ligase</keyword>
<keyword id="KW-0547">Nucleotide-binding</keyword>
<keyword id="KW-0648">Protein biosynthesis</keyword>
<name>SYW_LISIN</name>
<feature type="chain" id="PRO_0000136642" description="Tryptophan--tRNA ligase">
    <location>
        <begin position="1"/>
        <end position="331"/>
    </location>
</feature>
<feature type="short sequence motif" description="'HIGH' region" evidence="1">
    <location>
        <begin position="11"/>
        <end position="19"/>
    </location>
</feature>
<feature type="short sequence motif" description="'KMSKS' region" evidence="1">
    <location>
        <begin position="193"/>
        <end position="197"/>
    </location>
</feature>
<feature type="binding site" evidence="1">
    <location>
        <begin position="10"/>
        <end position="12"/>
    </location>
    <ligand>
        <name>ATP</name>
        <dbReference type="ChEBI" id="CHEBI:30616"/>
    </ligand>
</feature>
<feature type="binding site" evidence="1">
    <location>
        <begin position="18"/>
        <end position="19"/>
    </location>
    <ligand>
        <name>ATP</name>
        <dbReference type="ChEBI" id="CHEBI:30616"/>
    </ligand>
</feature>
<feature type="binding site" evidence="1">
    <location>
        <position position="133"/>
    </location>
    <ligand>
        <name>L-tryptophan</name>
        <dbReference type="ChEBI" id="CHEBI:57912"/>
    </ligand>
</feature>
<feature type="binding site" evidence="1">
    <location>
        <begin position="145"/>
        <end position="147"/>
    </location>
    <ligand>
        <name>ATP</name>
        <dbReference type="ChEBI" id="CHEBI:30616"/>
    </ligand>
</feature>
<feature type="binding site" evidence="1">
    <location>
        <position position="184"/>
    </location>
    <ligand>
        <name>ATP</name>
        <dbReference type="ChEBI" id="CHEBI:30616"/>
    </ligand>
</feature>
<feature type="binding site" evidence="1">
    <location>
        <begin position="193"/>
        <end position="197"/>
    </location>
    <ligand>
        <name>ATP</name>
        <dbReference type="ChEBI" id="CHEBI:30616"/>
    </ligand>
</feature>
<protein>
    <recommendedName>
        <fullName evidence="1">Tryptophan--tRNA ligase</fullName>
        <ecNumber evidence="1">6.1.1.2</ecNumber>
    </recommendedName>
    <alternativeName>
        <fullName evidence="1">Tryptophanyl-tRNA synthetase</fullName>
        <shortName evidence="1">TrpRS</shortName>
    </alternativeName>
</protein>
<comment type="function">
    <text evidence="1">Catalyzes the attachment of tryptophan to tRNA(Trp).</text>
</comment>
<comment type="catalytic activity">
    <reaction evidence="1">
        <text>tRNA(Trp) + L-tryptophan + ATP = L-tryptophyl-tRNA(Trp) + AMP + diphosphate + H(+)</text>
        <dbReference type="Rhea" id="RHEA:24080"/>
        <dbReference type="Rhea" id="RHEA-COMP:9671"/>
        <dbReference type="Rhea" id="RHEA-COMP:9705"/>
        <dbReference type="ChEBI" id="CHEBI:15378"/>
        <dbReference type="ChEBI" id="CHEBI:30616"/>
        <dbReference type="ChEBI" id="CHEBI:33019"/>
        <dbReference type="ChEBI" id="CHEBI:57912"/>
        <dbReference type="ChEBI" id="CHEBI:78442"/>
        <dbReference type="ChEBI" id="CHEBI:78535"/>
        <dbReference type="ChEBI" id="CHEBI:456215"/>
        <dbReference type="EC" id="6.1.1.2"/>
    </reaction>
</comment>
<comment type="subunit">
    <text evidence="1">Homodimer.</text>
</comment>
<comment type="subcellular location">
    <subcellularLocation>
        <location evidence="1">Cytoplasm</location>
    </subcellularLocation>
</comment>
<comment type="similarity">
    <text evidence="1">Belongs to the class-I aminoacyl-tRNA synthetase family.</text>
</comment>
<reference key="1">
    <citation type="journal article" date="2001" name="Science">
        <title>Comparative genomics of Listeria species.</title>
        <authorList>
            <person name="Glaser P."/>
            <person name="Frangeul L."/>
            <person name="Buchrieser C."/>
            <person name="Rusniok C."/>
            <person name="Amend A."/>
            <person name="Baquero F."/>
            <person name="Berche P."/>
            <person name="Bloecker H."/>
            <person name="Brandt P."/>
            <person name="Chakraborty T."/>
            <person name="Charbit A."/>
            <person name="Chetouani F."/>
            <person name="Couve E."/>
            <person name="de Daruvar A."/>
            <person name="Dehoux P."/>
            <person name="Domann E."/>
            <person name="Dominguez-Bernal G."/>
            <person name="Duchaud E."/>
            <person name="Durant L."/>
            <person name="Dussurget O."/>
            <person name="Entian K.-D."/>
            <person name="Fsihi H."/>
            <person name="Garcia-del Portillo F."/>
            <person name="Garrido P."/>
            <person name="Gautier L."/>
            <person name="Goebel W."/>
            <person name="Gomez-Lopez N."/>
            <person name="Hain T."/>
            <person name="Hauf J."/>
            <person name="Jackson D."/>
            <person name="Jones L.-M."/>
            <person name="Kaerst U."/>
            <person name="Kreft J."/>
            <person name="Kuhn M."/>
            <person name="Kunst F."/>
            <person name="Kurapkat G."/>
            <person name="Madueno E."/>
            <person name="Maitournam A."/>
            <person name="Mata Vicente J."/>
            <person name="Ng E."/>
            <person name="Nedjari H."/>
            <person name="Nordsiek G."/>
            <person name="Novella S."/>
            <person name="de Pablos B."/>
            <person name="Perez-Diaz J.-C."/>
            <person name="Purcell R."/>
            <person name="Remmel B."/>
            <person name="Rose M."/>
            <person name="Schlueter T."/>
            <person name="Simoes N."/>
            <person name="Tierrez A."/>
            <person name="Vazquez-Boland J.-A."/>
            <person name="Voss H."/>
            <person name="Wehland J."/>
            <person name="Cossart P."/>
        </authorList>
    </citation>
    <scope>NUCLEOTIDE SEQUENCE [LARGE SCALE GENOMIC DNA]</scope>
    <source>
        <strain>ATCC BAA-680 / CLIP 11262</strain>
    </source>
</reference>
<dbReference type="EC" id="6.1.1.2" evidence="1"/>
<dbReference type="EMBL" id="AL596171">
    <property type="protein sequence ID" value="CAC97529.1"/>
    <property type="molecule type" value="Genomic_DNA"/>
</dbReference>
<dbReference type="PIR" id="AI1719">
    <property type="entry name" value="AI1719"/>
</dbReference>
<dbReference type="RefSeq" id="WP_010991117.1">
    <property type="nucleotide sequence ID" value="NC_003212.1"/>
</dbReference>
<dbReference type="SMR" id="Q929H5"/>
<dbReference type="STRING" id="272626.gene:17566663"/>
<dbReference type="KEGG" id="lin:trpS"/>
<dbReference type="eggNOG" id="COG0180">
    <property type="taxonomic scope" value="Bacteria"/>
</dbReference>
<dbReference type="HOGENOM" id="CLU_029244_1_1_9"/>
<dbReference type="OrthoDB" id="9801042at2"/>
<dbReference type="Proteomes" id="UP000002513">
    <property type="component" value="Chromosome"/>
</dbReference>
<dbReference type="GO" id="GO:0005829">
    <property type="term" value="C:cytosol"/>
    <property type="evidence" value="ECO:0007669"/>
    <property type="project" value="TreeGrafter"/>
</dbReference>
<dbReference type="GO" id="GO:0005524">
    <property type="term" value="F:ATP binding"/>
    <property type="evidence" value="ECO:0007669"/>
    <property type="project" value="UniProtKB-UniRule"/>
</dbReference>
<dbReference type="GO" id="GO:0004830">
    <property type="term" value="F:tryptophan-tRNA ligase activity"/>
    <property type="evidence" value="ECO:0007669"/>
    <property type="project" value="UniProtKB-UniRule"/>
</dbReference>
<dbReference type="GO" id="GO:0006436">
    <property type="term" value="P:tryptophanyl-tRNA aminoacylation"/>
    <property type="evidence" value="ECO:0007669"/>
    <property type="project" value="UniProtKB-UniRule"/>
</dbReference>
<dbReference type="CDD" id="cd00806">
    <property type="entry name" value="TrpRS_core"/>
    <property type="match status" value="1"/>
</dbReference>
<dbReference type="FunFam" id="1.10.240.10:FF:000002">
    <property type="entry name" value="Tryptophan--tRNA ligase"/>
    <property type="match status" value="1"/>
</dbReference>
<dbReference type="Gene3D" id="3.40.50.620">
    <property type="entry name" value="HUPs"/>
    <property type="match status" value="1"/>
</dbReference>
<dbReference type="Gene3D" id="1.10.240.10">
    <property type="entry name" value="Tyrosyl-Transfer RNA Synthetase"/>
    <property type="match status" value="1"/>
</dbReference>
<dbReference type="HAMAP" id="MF_00140_B">
    <property type="entry name" value="Trp_tRNA_synth_B"/>
    <property type="match status" value="1"/>
</dbReference>
<dbReference type="InterPro" id="IPR001412">
    <property type="entry name" value="aa-tRNA-synth_I_CS"/>
</dbReference>
<dbReference type="InterPro" id="IPR002305">
    <property type="entry name" value="aa-tRNA-synth_Ic"/>
</dbReference>
<dbReference type="InterPro" id="IPR014729">
    <property type="entry name" value="Rossmann-like_a/b/a_fold"/>
</dbReference>
<dbReference type="InterPro" id="IPR002306">
    <property type="entry name" value="Trp-tRNA-ligase"/>
</dbReference>
<dbReference type="InterPro" id="IPR024109">
    <property type="entry name" value="Trp-tRNA-ligase_bac-type"/>
</dbReference>
<dbReference type="InterPro" id="IPR050203">
    <property type="entry name" value="Trp-tRNA_synthetase"/>
</dbReference>
<dbReference type="NCBIfam" id="TIGR00233">
    <property type="entry name" value="trpS"/>
    <property type="match status" value="1"/>
</dbReference>
<dbReference type="PANTHER" id="PTHR43766">
    <property type="entry name" value="TRYPTOPHAN--TRNA LIGASE, MITOCHONDRIAL"/>
    <property type="match status" value="1"/>
</dbReference>
<dbReference type="PANTHER" id="PTHR43766:SF1">
    <property type="entry name" value="TRYPTOPHAN--TRNA LIGASE, MITOCHONDRIAL"/>
    <property type="match status" value="1"/>
</dbReference>
<dbReference type="Pfam" id="PF00579">
    <property type="entry name" value="tRNA-synt_1b"/>
    <property type="match status" value="1"/>
</dbReference>
<dbReference type="PRINTS" id="PR01039">
    <property type="entry name" value="TRNASYNTHTRP"/>
</dbReference>
<dbReference type="SUPFAM" id="SSF52374">
    <property type="entry name" value="Nucleotidylyl transferase"/>
    <property type="match status" value="1"/>
</dbReference>
<dbReference type="PROSITE" id="PS00178">
    <property type="entry name" value="AA_TRNA_LIGASE_I"/>
    <property type="match status" value="1"/>
</dbReference>
<accession>Q929H5</accession>